<feature type="chain" id="PRO_0000427679" description="Probable diacyglycerol O-acyltransferase Tgs4">
    <location>
        <begin position="1"/>
        <end position="474"/>
    </location>
</feature>
<feature type="active site" description="Proton acceptor" evidence="2">
    <location>
        <position position="135"/>
    </location>
</feature>
<protein>
    <recommendedName>
        <fullName>Probable diacyglycerol O-acyltransferase Tgs4</fullName>
        <shortName>TGS4</shortName>
        <ecNumber evidence="1">2.3.1.20</ecNumber>
    </recommendedName>
    <alternativeName>
        <fullName>Probable triacylglycerol synthase tgs4</fullName>
    </alternativeName>
</protein>
<name>TGS4_MYCTO</name>
<comment type="function">
    <text evidence="1">Required for maintaining the appropriate mycolic acid composition and permeability of the envelope on its exposure to acidic pH.</text>
</comment>
<comment type="catalytic activity">
    <reaction evidence="1">
        <text>an acyl-CoA + a 1,2-diacyl-sn-glycerol = a triacyl-sn-glycerol + CoA</text>
        <dbReference type="Rhea" id="RHEA:10868"/>
        <dbReference type="ChEBI" id="CHEBI:17815"/>
        <dbReference type="ChEBI" id="CHEBI:57287"/>
        <dbReference type="ChEBI" id="CHEBI:58342"/>
        <dbReference type="ChEBI" id="CHEBI:64615"/>
        <dbReference type="EC" id="2.3.1.20"/>
    </reaction>
</comment>
<comment type="pathway">
    <text>Glycerolipid metabolism; triacylglycerol biosynthesis.</text>
</comment>
<comment type="similarity">
    <text evidence="3">Belongs to the long-chain O-acyltransferase family.</text>
</comment>
<dbReference type="EC" id="2.3.1.20" evidence="1"/>
<dbReference type="EMBL" id="AE000516">
    <property type="protein sequence ID" value="AAK47509.1"/>
    <property type="molecule type" value="Genomic_DNA"/>
</dbReference>
<dbReference type="PIR" id="D70853">
    <property type="entry name" value="D70853"/>
</dbReference>
<dbReference type="RefSeq" id="WP_003416079.1">
    <property type="nucleotide sequence ID" value="NZ_KK341227.1"/>
</dbReference>
<dbReference type="SMR" id="P9WKC2"/>
<dbReference type="KEGG" id="mtc:MT3173"/>
<dbReference type="PATRIC" id="fig|83331.31.peg.3419"/>
<dbReference type="HOGENOM" id="CLU_024186_4_1_11"/>
<dbReference type="UniPathway" id="UPA00282"/>
<dbReference type="Proteomes" id="UP000001020">
    <property type="component" value="Chromosome"/>
</dbReference>
<dbReference type="GO" id="GO:0005886">
    <property type="term" value="C:plasma membrane"/>
    <property type="evidence" value="ECO:0007669"/>
    <property type="project" value="TreeGrafter"/>
</dbReference>
<dbReference type="GO" id="GO:0004144">
    <property type="term" value="F:diacylglycerol O-acyltransferase activity"/>
    <property type="evidence" value="ECO:0007669"/>
    <property type="project" value="UniProtKB-EC"/>
</dbReference>
<dbReference type="GO" id="GO:0051701">
    <property type="term" value="P:biological process involved in interaction with host"/>
    <property type="evidence" value="ECO:0007669"/>
    <property type="project" value="TreeGrafter"/>
</dbReference>
<dbReference type="GO" id="GO:0006071">
    <property type="term" value="P:glycerol metabolic process"/>
    <property type="evidence" value="ECO:0007669"/>
    <property type="project" value="UniProtKB-KW"/>
</dbReference>
<dbReference type="GO" id="GO:0001666">
    <property type="term" value="P:response to hypoxia"/>
    <property type="evidence" value="ECO:0007669"/>
    <property type="project" value="TreeGrafter"/>
</dbReference>
<dbReference type="GO" id="GO:0071731">
    <property type="term" value="P:response to nitric oxide"/>
    <property type="evidence" value="ECO:0007669"/>
    <property type="project" value="TreeGrafter"/>
</dbReference>
<dbReference type="GO" id="GO:0019432">
    <property type="term" value="P:triglyceride biosynthetic process"/>
    <property type="evidence" value="ECO:0007669"/>
    <property type="project" value="UniProtKB-UniPathway"/>
</dbReference>
<dbReference type="InterPro" id="IPR014292">
    <property type="entry name" value="Acyl_transf_WS/DGAT"/>
</dbReference>
<dbReference type="InterPro" id="IPR045034">
    <property type="entry name" value="O-acyltransferase_WSD1-like"/>
</dbReference>
<dbReference type="InterPro" id="IPR009721">
    <property type="entry name" value="O-acyltransferase_WSD1_C"/>
</dbReference>
<dbReference type="InterPro" id="IPR004255">
    <property type="entry name" value="O-acyltransferase_WSD1_N"/>
</dbReference>
<dbReference type="NCBIfam" id="TIGR02946">
    <property type="entry name" value="acyl_WS_DGAT"/>
    <property type="match status" value="1"/>
</dbReference>
<dbReference type="PANTHER" id="PTHR31650">
    <property type="entry name" value="O-ACYLTRANSFERASE (WSD1-LIKE) FAMILY PROTEIN"/>
    <property type="match status" value="1"/>
</dbReference>
<dbReference type="PANTHER" id="PTHR31650:SF1">
    <property type="entry name" value="WAX ESTER SYNTHASE_DIACYLGLYCEROL ACYLTRANSFERASE 4-RELATED"/>
    <property type="match status" value="1"/>
</dbReference>
<dbReference type="Pfam" id="PF06974">
    <property type="entry name" value="WS_DGAT_C"/>
    <property type="match status" value="1"/>
</dbReference>
<dbReference type="Pfam" id="PF03007">
    <property type="entry name" value="WS_DGAT_cat"/>
    <property type="match status" value="1"/>
</dbReference>
<evidence type="ECO:0000250" key="1">
    <source>
        <dbReference type="UniProtKB" id="P9WKC3"/>
    </source>
</evidence>
<evidence type="ECO:0000255" key="2"/>
<evidence type="ECO:0000305" key="3"/>
<sequence length="474" mass="50887">MTRINPIDLSFLLLERANRPNHMAAYTIFEKPKGQKSSFGPRLFDAYRHSQAAKPFNHKLKWLGTDVAAWETVEPDMGYHIRHLALPAPGSMQQFHETVSFLNTGLLDRGHPMWECYIIDGIERGRIAILLKVHHALIDGEGGLRAMRNFLSDSPDDTTLAGPWMSAQGADRPRRTPATVSRRAQLQGQLQGMIKGLTKLPSGLFGVSADAADLGAQALSLKARKASLPFTARRTLFNNTAKSAARAYGNVELPLADVKALAKATGTSVNDVVMTVIDDALHHYLAEHQASTDRPLVAFMPMSLREKSGEGGGNRVSAELVPMGAPKASPVERLKEINAATTRAKDKGRGMQTTSRQAYALLLLGSLTVADALPLLGKLPSANVVISNMKGPTEQLYLAGAPLVAFSGLPIVPPGAGLNVTFASINTALCIAIGAAPEAVHEPSRLAELMQRAFTELQTEAGTTSPTTSKSRTP</sequence>
<keyword id="KW-0012">Acyltransferase</keyword>
<keyword id="KW-0319">Glycerol metabolism</keyword>
<keyword id="KW-0444">Lipid biosynthesis</keyword>
<keyword id="KW-0443">Lipid metabolism</keyword>
<keyword id="KW-1185">Reference proteome</keyword>
<keyword id="KW-0808">Transferase</keyword>
<organism>
    <name type="scientific">Mycobacterium tuberculosis (strain CDC 1551 / Oshkosh)</name>
    <dbReference type="NCBI Taxonomy" id="83331"/>
    <lineage>
        <taxon>Bacteria</taxon>
        <taxon>Bacillati</taxon>
        <taxon>Actinomycetota</taxon>
        <taxon>Actinomycetes</taxon>
        <taxon>Mycobacteriales</taxon>
        <taxon>Mycobacteriaceae</taxon>
        <taxon>Mycobacterium</taxon>
        <taxon>Mycobacterium tuberculosis complex</taxon>
    </lineage>
</organism>
<accession>P9WKC2</accession>
<accession>L0TBT5</accession>
<accession>O53305</accession>
<accession>P67208</accession>
<gene>
    <name type="primary">tgs4</name>
    <name type="ordered locus">MT3173</name>
</gene>
<proteinExistence type="inferred from homology"/>
<reference key="1">
    <citation type="journal article" date="2002" name="J. Bacteriol.">
        <title>Whole-genome comparison of Mycobacterium tuberculosis clinical and laboratory strains.</title>
        <authorList>
            <person name="Fleischmann R.D."/>
            <person name="Alland D."/>
            <person name="Eisen J.A."/>
            <person name="Carpenter L."/>
            <person name="White O."/>
            <person name="Peterson J.D."/>
            <person name="DeBoy R.T."/>
            <person name="Dodson R.J."/>
            <person name="Gwinn M.L."/>
            <person name="Haft D.H."/>
            <person name="Hickey E.K."/>
            <person name="Kolonay J.F."/>
            <person name="Nelson W.C."/>
            <person name="Umayam L.A."/>
            <person name="Ermolaeva M.D."/>
            <person name="Salzberg S.L."/>
            <person name="Delcher A."/>
            <person name="Utterback T.R."/>
            <person name="Weidman J.F."/>
            <person name="Khouri H.M."/>
            <person name="Gill J."/>
            <person name="Mikula A."/>
            <person name="Bishai W."/>
            <person name="Jacobs W.R. Jr."/>
            <person name="Venter J.C."/>
            <person name="Fraser C.M."/>
        </authorList>
    </citation>
    <scope>NUCLEOTIDE SEQUENCE [LARGE SCALE GENOMIC DNA]</scope>
    <source>
        <strain>CDC 1551 / Oshkosh</strain>
    </source>
</reference>